<gene>
    <name type="primary">HOG1</name>
</gene>
<sequence>VAVKKIMKPFSTPVLAKRTYRELKLLKHLKHENVISLSDIFISPLEDIYFVTELLGTDLHRLLTSRPLEKQFIQYFLYQIMRGLKYVHSAGVVHRDLKPSNILVNENCDLKICDFGLARIQDPQMTGYVSTRYYRAPEIMLTWQKYDVEVDIWSAGCIFAEMLEGKPLFPGKDHVNQFSIITELLGTPPDDVINTIASEN</sequence>
<proteinExistence type="inferred from homology"/>
<protein>
    <recommendedName>
        <fullName>Mitogen-activated protein kinase HOG1</fullName>
        <shortName>MAP kinase HOG1</shortName>
        <ecNumber evidence="2">2.7.11.24</ecNumber>
    </recommendedName>
</protein>
<reference key="1">
    <citation type="journal article" date="2005" name="Acta Phytopathol. Entomol. Hung.">
        <title>Identification of new molecular hallmarks for YSAPK MAPKs: application for cloning strategies in different fungal filamentous species.</title>
        <authorList>
            <person name="Adam A.L."/>
            <person name="Kohut G."/>
            <person name="Laday M."/>
        </authorList>
    </citation>
    <scope>NUCLEOTIDE SEQUENCE [GENOMIC DNA]</scope>
    <source>
        <strain>ITEM 2287</strain>
    </source>
</reference>
<accession>Q4PKS0</accession>
<evidence type="ECO:0000250" key="1"/>
<evidence type="ECO:0000250" key="2">
    <source>
        <dbReference type="UniProtKB" id="P32485"/>
    </source>
</evidence>
<evidence type="ECO:0000250" key="3">
    <source>
        <dbReference type="UniProtKB" id="Q16539"/>
    </source>
</evidence>
<evidence type="ECO:0000250" key="4">
    <source>
        <dbReference type="UniProtKB" id="Q4WSF6"/>
    </source>
</evidence>
<evidence type="ECO:0000255" key="5">
    <source>
        <dbReference type="PROSITE-ProRule" id="PRU00159"/>
    </source>
</evidence>
<evidence type="ECO:0000255" key="6">
    <source>
        <dbReference type="PROSITE-ProRule" id="PRU10027"/>
    </source>
</evidence>
<name>HOG1_GIBIN</name>
<feature type="chain" id="PRO_0000289690" description="Mitogen-activated protein kinase HOG1">
    <location>
        <begin position="1" status="less than"/>
        <end position="200" status="greater than"/>
    </location>
</feature>
<feature type="domain" description="Protein kinase" evidence="5">
    <location>
        <begin position="1" status="less than"/>
        <end position="200" status="greater than"/>
    </location>
</feature>
<feature type="short sequence motif" description="TXY">
    <location>
        <begin position="126"/>
        <end position="128"/>
    </location>
</feature>
<feature type="active site" description="Proton acceptor" evidence="5 6">
    <location>
        <position position="96"/>
    </location>
</feature>
<feature type="binding site" evidence="5">
    <location>
        <position position="4"/>
    </location>
    <ligand>
        <name>ATP</name>
        <dbReference type="ChEBI" id="CHEBI:30616"/>
    </ligand>
</feature>
<feature type="modified residue" description="Phosphothreonine" evidence="1">
    <location>
        <position position="126"/>
    </location>
</feature>
<feature type="modified residue" description="Phosphotyrosine" evidence="1">
    <location>
        <position position="128"/>
    </location>
</feature>
<feature type="non-terminal residue">
    <location>
        <position position="1"/>
    </location>
</feature>
<feature type="non-terminal residue">
    <location>
        <position position="200"/>
    </location>
</feature>
<organism>
    <name type="scientific">Gibberella intermedia</name>
    <name type="common">Bulb rot disease fungus</name>
    <name type="synonym">Fusarium proliferatum</name>
    <dbReference type="NCBI Taxonomy" id="948311"/>
    <lineage>
        <taxon>Eukaryota</taxon>
        <taxon>Fungi</taxon>
        <taxon>Dikarya</taxon>
        <taxon>Ascomycota</taxon>
        <taxon>Pezizomycotina</taxon>
        <taxon>Sordariomycetes</taxon>
        <taxon>Hypocreomycetidae</taxon>
        <taxon>Hypocreales</taxon>
        <taxon>Nectriaceae</taxon>
        <taxon>Fusarium</taxon>
        <taxon>Fusarium fujikuroi species complex</taxon>
    </lineage>
</organism>
<dbReference type="EC" id="2.7.11.24" evidence="2"/>
<dbReference type="EMBL" id="DQ071424">
    <property type="protein sequence ID" value="AAY82586.1"/>
    <property type="molecule type" value="Genomic_DNA"/>
</dbReference>
<dbReference type="SMR" id="Q4PKS0"/>
<dbReference type="GO" id="GO:0005737">
    <property type="term" value="C:cytoplasm"/>
    <property type="evidence" value="ECO:0007669"/>
    <property type="project" value="UniProtKB-SubCell"/>
</dbReference>
<dbReference type="GO" id="GO:0005634">
    <property type="term" value="C:nucleus"/>
    <property type="evidence" value="ECO:0007669"/>
    <property type="project" value="UniProtKB-SubCell"/>
</dbReference>
<dbReference type="GO" id="GO:0005524">
    <property type="term" value="F:ATP binding"/>
    <property type="evidence" value="ECO:0007669"/>
    <property type="project" value="UniProtKB-KW"/>
</dbReference>
<dbReference type="GO" id="GO:0004707">
    <property type="term" value="F:MAP kinase activity"/>
    <property type="evidence" value="ECO:0007669"/>
    <property type="project" value="UniProtKB-EC"/>
</dbReference>
<dbReference type="GO" id="GO:0106310">
    <property type="term" value="F:protein serine kinase activity"/>
    <property type="evidence" value="ECO:0007669"/>
    <property type="project" value="RHEA"/>
</dbReference>
<dbReference type="FunFam" id="1.10.510.10:FF:000049">
    <property type="entry name" value="Mitogen-activated protein kinase"/>
    <property type="match status" value="1"/>
</dbReference>
<dbReference type="Gene3D" id="3.30.200.20">
    <property type="entry name" value="Phosphorylase Kinase, domain 1"/>
    <property type="match status" value="1"/>
</dbReference>
<dbReference type="Gene3D" id="1.10.510.10">
    <property type="entry name" value="Transferase(Phosphotransferase) domain 1"/>
    <property type="match status" value="1"/>
</dbReference>
<dbReference type="InterPro" id="IPR011009">
    <property type="entry name" value="Kinase-like_dom_sf"/>
</dbReference>
<dbReference type="InterPro" id="IPR050117">
    <property type="entry name" value="MAP_kinase"/>
</dbReference>
<dbReference type="InterPro" id="IPR003527">
    <property type="entry name" value="MAP_kinase_CS"/>
</dbReference>
<dbReference type="InterPro" id="IPR000719">
    <property type="entry name" value="Prot_kinase_dom"/>
</dbReference>
<dbReference type="InterPro" id="IPR008271">
    <property type="entry name" value="Ser/Thr_kinase_AS"/>
</dbReference>
<dbReference type="PANTHER" id="PTHR24055">
    <property type="entry name" value="MITOGEN-ACTIVATED PROTEIN KINASE"/>
    <property type="match status" value="1"/>
</dbReference>
<dbReference type="Pfam" id="PF00069">
    <property type="entry name" value="Pkinase"/>
    <property type="match status" value="1"/>
</dbReference>
<dbReference type="SMART" id="SM00220">
    <property type="entry name" value="S_TKc"/>
    <property type="match status" value="1"/>
</dbReference>
<dbReference type="SUPFAM" id="SSF56112">
    <property type="entry name" value="Protein kinase-like (PK-like)"/>
    <property type="match status" value="1"/>
</dbReference>
<dbReference type="PROSITE" id="PS01351">
    <property type="entry name" value="MAPK"/>
    <property type="match status" value="1"/>
</dbReference>
<dbReference type="PROSITE" id="PS50011">
    <property type="entry name" value="PROTEIN_KINASE_DOM"/>
    <property type="match status" value="1"/>
</dbReference>
<dbReference type="PROSITE" id="PS00108">
    <property type="entry name" value="PROTEIN_KINASE_ST"/>
    <property type="match status" value="1"/>
</dbReference>
<comment type="function">
    <text evidence="4">Proline-directed serine/threonine-protein kinase involved in a signal transduction pathway that is activated by changes in the osmolarity of the extracellular environment. Controls osmotic regulation of transcription of target genes.</text>
</comment>
<comment type="catalytic activity">
    <reaction evidence="2">
        <text>L-seryl-[protein] + ATP = O-phospho-L-seryl-[protein] + ADP + H(+)</text>
        <dbReference type="Rhea" id="RHEA:17989"/>
        <dbReference type="Rhea" id="RHEA-COMP:9863"/>
        <dbReference type="Rhea" id="RHEA-COMP:11604"/>
        <dbReference type="ChEBI" id="CHEBI:15378"/>
        <dbReference type="ChEBI" id="CHEBI:29999"/>
        <dbReference type="ChEBI" id="CHEBI:30616"/>
        <dbReference type="ChEBI" id="CHEBI:83421"/>
        <dbReference type="ChEBI" id="CHEBI:456216"/>
        <dbReference type="EC" id="2.7.11.24"/>
    </reaction>
    <physiologicalReaction direction="left-to-right" evidence="2">
        <dbReference type="Rhea" id="RHEA:17990"/>
    </physiologicalReaction>
</comment>
<comment type="catalytic activity">
    <reaction evidence="2">
        <text>L-threonyl-[protein] + ATP = O-phospho-L-threonyl-[protein] + ADP + H(+)</text>
        <dbReference type="Rhea" id="RHEA:46608"/>
        <dbReference type="Rhea" id="RHEA-COMP:11060"/>
        <dbReference type="Rhea" id="RHEA-COMP:11605"/>
        <dbReference type="ChEBI" id="CHEBI:15378"/>
        <dbReference type="ChEBI" id="CHEBI:30013"/>
        <dbReference type="ChEBI" id="CHEBI:30616"/>
        <dbReference type="ChEBI" id="CHEBI:61977"/>
        <dbReference type="ChEBI" id="CHEBI:456216"/>
        <dbReference type="EC" id="2.7.11.24"/>
    </reaction>
    <physiologicalReaction direction="left-to-right" evidence="2">
        <dbReference type="Rhea" id="RHEA:46609"/>
    </physiologicalReaction>
</comment>
<comment type="cofactor">
    <cofactor evidence="3">
        <name>Mg(2+)</name>
        <dbReference type="ChEBI" id="CHEBI:18420"/>
    </cofactor>
</comment>
<comment type="activity regulation">
    <text evidence="1">Activated by tyrosine and threonine phosphorylation.</text>
</comment>
<comment type="subcellular location">
    <subcellularLocation>
        <location evidence="1">Cytoplasm</location>
    </subcellularLocation>
    <subcellularLocation>
        <location evidence="1">Nucleus</location>
    </subcellularLocation>
</comment>
<comment type="domain">
    <text>The TXY motif contains the threonine and tyrosine residues whose phosphorylation activates the MAP kinases.</text>
</comment>
<comment type="PTM">
    <text evidence="1">Dually phosphorylated on Thr-126 and Tyr-128, which activates the enzyme.</text>
</comment>
<comment type="similarity">
    <text evidence="5">Belongs to the protein kinase superfamily. Ser/Thr protein kinase family. MAP kinase subfamily. HOG1 sub-subfamily.</text>
</comment>
<keyword id="KW-0010">Activator</keyword>
<keyword id="KW-0067">ATP-binding</keyword>
<keyword id="KW-0963">Cytoplasm</keyword>
<keyword id="KW-0418">Kinase</keyword>
<keyword id="KW-0547">Nucleotide-binding</keyword>
<keyword id="KW-0539">Nucleus</keyword>
<keyword id="KW-0597">Phosphoprotein</keyword>
<keyword id="KW-0723">Serine/threonine-protein kinase</keyword>
<keyword id="KW-0804">Transcription</keyword>
<keyword id="KW-0805">Transcription regulation</keyword>
<keyword id="KW-0808">Transferase</keyword>